<name>PAG2_PIG</name>
<comment type="subcellular location">
    <subcellularLocation>
        <location>Secreted</location>
        <location>Extracellular space</location>
    </subcellularLocation>
</comment>
<comment type="tissue specificity">
    <text>Expressed throughout the chorion, with the signal localized exclusively over the trophectoderm.</text>
</comment>
<comment type="developmental stage">
    <text>Expression was detected at day 15, coinciding with the beginning of implantation, and continued throughout gestation.</text>
</comment>
<comment type="similarity">
    <text evidence="5">Belongs to the peptidase A1 family.</text>
</comment>
<keyword id="KW-0064">Aspartyl protease</keyword>
<keyword id="KW-1015">Disulfide bond</keyword>
<keyword id="KW-0325">Glycoprotein</keyword>
<keyword id="KW-0378">Hydrolase</keyword>
<keyword id="KW-0645">Protease</keyword>
<keyword id="KW-1185">Reference proteome</keyword>
<keyword id="KW-0964">Secreted</keyword>
<keyword id="KW-0732">Signal</keyword>
<keyword id="KW-0865">Zymogen</keyword>
<reference key="1">
    <citation type="journal article" date="1995" name="Biol. Reprod.">
        <title>Porcine pregnancy-associated glycoproteins: new members of the aspartic proteinase gene family expressed in trophectoderm.</title>
        <authorList>
            <person name="Szafranska B."/>
            <person name="Xie S."/>
            <person name="Green J."/>
            <person name="Roberts R.M."/>
        </authorList>
    </citation>
    <scope>NUCLEOTIDE SEQUENCE [GENOMIC DNA]</scope>
</reference>
<reference key="2">
    <citation type="journal article" date="2001" name="Mol. Reprod. Dev.">
        <title>Gene for porcine pregnancy-associated glycoprotein 2 (poPAG2): its structural organization and analysis of its promoter.</title>
        <authorList>
            <person name="Szafranska B."/>
            <person name="Miura R."/>
            <person name="Ghosh D."/>
            <person name="Ezashi T."/>
            <person name="Xie S."/>
            <person name="Roberts R.M."/>
            <person name="Green J.A."/>
        </authorList>
    </citation>
    <scope>NUCLEOTIDE SEQUENCE [GENOMIC DNA]</scope>
    <source>
        <tissue>Placenta</tissue>
    </source>
</reference>
<sequence length="420" mass="47132">MKWLVILGLVALSDCLVMIPLTKVKSVRESLREKGLLKNFLKEHPYNMIQNLLSKNSSHVQKFSYQPLRNYLDMVYVGNISIGTPPQQFSVVFDTGSSDLWVPSIYCKSKACVTHRSFNPSHSSTFHDRGKSIKLEYGSGKMSGFLGQDTVRIGQLTSTGQAFGLSKEETGKAFEHAIFDGILGLAYPSIAIKGTTTVIDNLKKQDQISEPVFAFYLSSDKEEGSVVMFGGVDKKYYKGDLKWVPLTQTSYWQIALDRITCRGRVIGCPRGCQAIVDTGTSMLHGPSKAVAKIHSLIKHFEKEYVVPCNARKALPDIVFTINNVDYPVPAQAYIRKYVVPCNARKALPDIVFTINNVDYPVPAQAYIRKNANNNRCYSTFEDIMDTLNQREIWILGDVFLRLYFTVYDEGQNRIGLAQAT</sequence>
<gene>
    <name type="primary">PAG2</name>
</gene>
<feature type="signal peptide" evidence="2">
    <location>
        <begin position="1"/>
        <end position="15"/>
    </location>
</feature>
<feature type="propeptide" id="PRO_0000026107" description="Activation peptide" evidence="2">
    <location>
        <begin position="16"/>
        <end status="unknown"/>
    </location>
</feature>
<feature type="chain" id="PRO_0000026108" description="Pregnancy-associated glycoprotein 2">
    <location>
        <begin status="unknown"/>
        <end position="420"/>
    </location>
</feature>
<feature type="domain" description="Peptidase A1" evidence="3">
    <location>
        <begin position="76"/>
        <end position="417"/>
    </location>
</feature>
<feature type="active site" evidence="4">
    <location>
        <position position="94"/>
    </location>
</feature>
<feature type="active site" evidence="4">
    <location>
        <position position="277"/>
    </location>
</feature>
<feature type="glycosylation site" description="N-linked (GlcNAc...) asparagine" evidence="2">
    <location>
        <position position="56"/>
    </location>
</feature>
<feature type="glycosylation site" description="N-linked (GlcNAc...) asparagine" evidence="2">
    <location>
        <position position="79"/>
    </location>
</feature>
<feature type="disulfide bond" evidence="1">
    <location>
        <begin position="107"/>
        <end position="112"/>
    </location>
</feature>
<feature type="disulfide bond" evidence="1">
    <location>
        <begin position="268"/>
        <end position="272"/>
    </location>
</feature>
<feature type="disulfide bond" evidence="1">
    <location>
        <begin position="341"/>
        <end position="376"/>
    </location>
</feature>
<feature type="sequence conflict" description="In Ref. 1." evidence="5" ref="1">
    <location>
        <begin position="335"/>
        <end position="367"/>
    </location>
</feature>
<accession>Q29079</accession>
<accession>Q29017</accession>
<protein>
    <recommendedName>
        <fullName>Pregnancy-associated glycoprotein 2</fullName>
        <shortName>PAG 2</shortName>
        <ecNumber>3.4.23.-</ecNumber>
    </recommendedName>
</protein>
<evidence type="ECO:0000250" key="1"/>
<evidence type="ECO:0000255" key="2"/>
<evidence type="ECO:0000255" key="3">
    <source>
        <dbReference type="PROSITE-ProRule" id="PRU01103"/>
    </source>
</evidence>
<evidence type="ECO:0000255" key="4">
    <source>
        <dbReference type="PROSITE-ProRule" id="PRU10094"/>
    </source>
</evidence>
<evidence type="ECO:0000305" key="5"/>
<dbReference type="EC" id="3.4.23.-"/>
<dbReference type="EMBL" id="U39763">
    <property type="protein sequence ID" value="AAA92055.1"/>
    <property type="molecule type" value="Genomic_DNA"/>
</dbReference>
<dbReference type="EMBL" id="U41421">
    <property type="protein sequence ID" value="AAA92055.1"/>
    <property type="status" value="JOINED"/>
    <property type="molecule type" value="Genomic_DNA"/>
</dbReference>
<dbReference type="EMBL" id="U41422">
    <property type="protein sequence ID" value="AAA92055.1"/>
    <property type="status" value="JOINED"/>
    <property type="molecule type" value="Genomic_DNA"/>
</dbReference>
<dbReference type="EMBL" id="U39199">
    <property type="protein sequence ID" value="AAA92055.1"/>
    <property type="status" value="JOINED"/>
    <property type="molecule type" value="Genomic_DNA"/>
</dbReference>
<dbReference type="EMBL" id="U41423">
    <property type="protein sequence ID" value="AAA92055.1"/>
    <property type="status" value="JOINED"/>
    <property type="molecule type" value="Genomic_DNA"/>
</dbReference>
<dbReference type="EMBL" id="U41424">
    <property type="protein sequence ID" value="AAA92055.1"/>
    <property type="status" value="JOINED"/>
    <property type="molecule type" value="Genomic_DNA"/>
</dbReference>
<dbReference type="EMBL" id="U39762">
    <property type="protein sequence ID" value="AAA92055.1"/>
    <property type="status" value="JOINED"/>
    <property type="molecule type" value="Genomic_DNA"/>
</dbReference>
<dbReference type="EMBL" id="L34361">
    <property type="protein sequence ID" value="AAA81531.1"/>
    <property type="molecule type" value="Genomic_DNA"/>
</dbReference>
<dbReference type="PIR" id="I46617">
    <property type="entry name" value="I46617"/>
</dbReference>
<dbReference type="SMR" id="Q29079"/>
<dbReference type="MEROPS" id="A01.051"/>
<dbReference type="GlyCosmos" id="Q29079">
    <property type="glycosylation" value="2 sites, No reported glycans"/>
</dbReference>
<dbReference type="GlyGen" id="Q29079">
    <property type="glycosylation" value="2 sites"/>
</dbReference>
<dbReference type="InParanoid" id="Q29079"/>
<dbReference type="Proteomes" id="UP000008227">
    <property type="component" value="Unplaced"/>
</dbReference>
<dbReference type="Proteomes" id="UP000314985">
    <property type="component" value="Unplaced"/>
</dbReference>
<dbReference type="Proteomes" id="UP000694570">
    <property type="component" value="Unplaced"/>
</dbReference>
<dbReference type="Proteomes" id="UP000694571">
    <property type="component" value="Unplaced"/>
</dbReference>
<dbReference type="Proteomes" id="UP000694720">
    <property type="component" value="Unplaced"/>
</dbReference>
<dbReference type="Proteomes" id="UP000694722">
    <property type="component" value="Unplaced"/>
</dbReference>
<dbReference type="Proteomes" id="UP000694723">
    <property type="component" value="Unplaced"/>
</dbReference>
<dbReference type="Proteomes" id="UP000694724">
    <property type="component" value="Unplaced"/>
</dbReference>
<dbReference type="Proteomes" id="UP000694725">
    <property type="component" value="Unplaced"/>
</dbReference>
<dbReference type="Proteomes" id="UP000694726">
    <property type="component" value="Unplaced"/>
</dbReference>
<dbReference type="Proteomes" id="UP000694727">
    <property type="component" value="Unplaced"/>
</dbReference>
<dbReference type="Proteomes" id="UP000694728">
    <property type="component" value="Unplaced"/>
</dbReference>
<dbReference type="GO" id="GO:0005576">
    <property type="term" value="C:extracellular region"/>
    <property type="evidence" value="ECO:0007669"/>
    <property type="project" value="UniProtKB-SubCell"/>
</dbReference>
<dbReference type="GO" id="GO:0004190">
    <property type="term" value="F:aspartic-type endopeptidase activity"/>
    <property type="evidence" value="ECO:0000318"/>
    <property type="project" value="GO_Central"/>
</dbReference>
<dbReference type="GO" id="GO:0006508">
    <property type="term" value="P:proteolysis"/>
    <property type="evidence" value="ECO:0000318"/>
    <property type="project" value="GO_Central"/>
</dbReference>
<dbReference type="FunFam" id="2.40.70.10:FF:000294">
    <property type="match status" value="1"/>
</dbReference>
<dbReference type="FunFam" id="2.40.70.10:FF:000004">
    <property type="entry name" value="Pepsin A"/>
    <property type="match status" value="1"/>
</dbReference>
<dbReference type="Gene3D" id="6.10.140.60">
    <property type="match status" value="1"/>
</dbReference>
<dbReference type="Gene3D" id="2.40.70.10">
    <property type="entry name" value="Acid Proteases"/>
    <property type="match status" value="3"/>
</dbReference>
<dbReference type="InterPro" id="IPR001461">
    <property type="entry name" value="Aspartic_peptidase_A1"/>
</dbReference>
<dbReference type="InterPro" id="IPR001969">
    <property type="entry name" value="Aspartic_peptidase_AS"/>
</dbReference>
<dbReference type="InterPro" id="IPR012848">
    <property type="entry name" value="Aspartic_peptidase_N"/>
</dbReference>
<dbReference type="InterPro" id="IPR033121">
    <property type="entry name" value="PEPTIDASE_A1"/>
</dbReference>
<dbReference type="InterPro" id="IPR021109">
    <property type="entry name" value="Peptidase_aspartic_dom_sf"/>
</dbReference>
<dbReference type="PANTHER" id="PTHR47966">
    <property type="entry name" value="BETA-SITE APP-CLEAVING ENZYME, ISOFORM A-RELATED"/>
    <property type="match status" value="1"/>
</dbReference>
<dbReference type="PANTHER" id="PTHR47966:SF49">
    <property type="entry name" value="PEPSIN A-5"/>
    <property type="match status" value="1"/>
</dbReference>
<dbReference type="Pfam" id="PF07966">
    <property type="entry name" value="A1_Propeptide"/>
    <property type="match status" value="1"/>
</dbReference>
<dbReference type="Pfam" id="PF00026">
    <property type="entry name" value="Asp"/>
    <property type="match status" value="2"/>
</dbReference>
<dbReference type="PRINTS" id="PR00792">
    <property type="entry name" value="PEPSIN"/>
</dbReference>
<dbReference type="SUPFAM" id="SSF50630">
    <property type="entry name" value="Acid proteases"/>
    <property type="match status" value="2"/>
</dbReference>
<dbReference type="PROSITE" id="PS00141">
    <property type="entry name" value="ASP_PROTEASE"/>
    <property type="match status" value="2"/>
</dbReference>
<dbReference type="PROSITE" id="PS51767">
    <property type="entry name" value="PEPTIDASE_A1"/>
    <property type="match status" value="1"/>
</dbReference>
<proteinExistence type="evidence at transcript level"/>
<organism>
    <name type="scientific">Sus scrofa</name>
    <name type="common">Pig</name>
    <dbReference type="NCBI Taxonomy" id="9823"/>
    <lineage>
        <taxon>Eukaryota</taxon>
        <taxon>Metazoa</taxon>
        <taxon>Chordata</taxon>
        <taxon>Craniata</taxon>
        <taxon>Vertebrata</taxon>
        <taxon>Euteleostomi</taxon>
        <taxon>Mammalia</taxon>
        <taxon>Eutheria</taxon>
        <taxon>Laurasiatheria</taxon>
        <taxon>Artiodactyla</taxon>
        <taxon>Suina</taxon>
        <taxon>Suidae</taxon>
        <taxon>Sus</taxon>
    </lineage>
</organism>